<organism>
    <name type="scientific">Bordetella avium (strain 197N)</name>
    <dbReference type="NCBI Taxonomy" id="360910"/>
    <lineage>
        <taxon>Bacteria</taxon>
        <taxon>Pseudomonadati</taxon>
        <taxon>Pseudomonadota</taxon>
        <taxon>Betaproteobacteria</taxon>
        <taxon>Burkholderiales</taxon>
        <taxon>Alcaligenaceae</taxon>
        <taxon>Bordetella</taxon>
    </lineage>
</organism>
<evidence type="ECO:0000255" key="1">
    <source>
        <dbReference type="HAMAP-Rule" id="MF_00598"/>
    </source>
</evidence>
<accession>Q2KTM3</accession>
<gene>
    <name evidence="1" type="primary">smg</name>
    <name type="ordered locus">BAV3377</name>
</gene>
<protein>
    <recommendedName>
        <fullName evidence="1">Protein Smg homolog</fullName>
    </recommendedName>
</protein>
<sequence>MFDILVYLFENYYTPQACPAADVLAKRLAAAGFEHEDIDDALGWLYGLAETTERCVELAQAPASGFRVYTDAEYQQLGSASIGFITFLESAGVLPAPLREIVIDRALASPEAPVSLSKIKIIALMVLWSQEAEIDNLVLEELLDDEEARRLH</sequence>
<dbReference type="EMBL" id="AM167904">
    <property type="protein sequence ID" value="CAJ50987.1"/>
    <property type="molecule type" value="Genomic_DNA"/>
</dbReference>
<dbReference type="RefSeq" id="WP_012419014.1">
    <property type="nucleotide sequence ID" value="NC_010645.1"/>
</dbReference>
<dbReference type="SMR" id="Q2KTM3"/>
<dbReference type="STRING" id="360910.BAV3377"/>
<dbReference type="GeneID" id="92933362"/>
<dbReference type="KEGG" id="bav:BAV3377"/>
<dbReference type="eggNOG" id="COG2922">
    <property type="taxonomic scope" value="Bacteria"/>
</dbReference>
<dbReference type="HOGENOM" id="CLU_133242_0_0_4"/>
<dbReference type="OrthoDB" id="5297467at2"/>
<dbReference type="Proteomes" id="UP000001977">
    <property type="component" value="Chromosome"/>
</dbReference>
<dbReference type="HAMAP" id="MF_00598">
    <property type="entry name" value="Smg"/>
    <property type="match status" value="1"/>
</dbReference>
<dbReference type="InterPro" id="IPR007456">
    <property type="entry name" value="Smg"/>
</dbReference>
<dbReference type="PANTHER" id="PTHR38692">
    <property type="entry name" value="PROTEIN SMG"/>
    <property type="match status" value="1"/>
</dbReference>
<dbReference type="PANTHER" id="PTHR38692:SF1">
    <property type="entry name" value="PROTEIN SMG"/>
    <property type="match status" value="1"/>
</dbReference>
<dbReference type="Pfam" id="PF04361">
    <property type="entry name" value="DUF494"/>
    <property type="match status" value="1"/>
</dbReference>
<name>SMG_BORA1</name>
<comment type="similarity">
    <text evidence="1">Belongs to the Smg family.</text>
</comment>
<proteinExistence type="inferred from homology"/>
<keyword id="KW-1185">Reference proteome</keyword>
<reference key="1">
    <citation type="journal article" date="2006" name="J. Bacteriol.">
        <title>Comparison of the genome sequence of the poultry pathogen Bordetella avium with those of B. bronchiseptica, B. pertussis, and B. parapertussis reveals extensive diversity in surface structures associated with host interaction.</title>
        <authorList>
            <person name="Sebaihia M."/>
            <person name="Preston A."/>
            <person name="Maskell D.J."/>
            <person name="Kuzmiak H."/>
            <person name="Connell T.D."/>
            <person name="King N.D."/>
            <person name="Orndorff P.E."/>
            <person name="Miyamoto D.M."/>
            <person name="Thomson N.R."/>
            <person name="Harris D."/>
            <person name="Goble A."/>
            <person name="Lord A."/>
            <person name="Murphy L."/>
            <person name="Quail M.A."/>
            <person name="Rutter S."/>
            <person name="Squares R."/>
            <person name="Squares S."/>
            <person name="Woodward J."/>
            <person name="Parkhill J."/>
            <person name="Temple L.M."/>
        </authorList>
    </citation>
    <scope>NUCLEOTIDE SEQUENCE [LARGE SCALE GENOMIC DNA]</scope>
    <source>
        <strain>197N</strain>
    </source>
</reference>
<feature type="chain" id="PRO_1000025646" description="Protein Smg homolog">
    <location>
        <begin position="1"/>
        <end position="152"/>
    </location>
</feature>